<evidence type="ECO:0000250" key="1">
    <source>
        <dbReference type="UniProtKB" id="P0C1R7"/>
    </source>
</evidence>
<evidence type="ECO:0000250" key="2">
    <source>
        <dbReference type="UniProtKB" id="P56636"/>
    </source>
</evidence>
<evidence type="ECO:0000269" key="3">
    <source>
    </source>
</evidence>
<evidence type="ECO:0000303" key="4">
    <source>
    </source>
</evidence>
<evidence type="ECO:0000305" key="5"/>
<evidence type="ECO:0000305" key="6">
    <source>
    </source>
</evidence>
<reference key="1">
    <citation type="journal article" date="2021" name="Saudi J. Biol. Sci.">
        <title>Mass spectrometric identification and denovo sequencing of novel conotoxins from vermivorous cone snail (Conus inscriptus), and preliminary screening of its venom for biological activities in vitro and in vivo.</title>
        <authorList>
            <person name="Jain R.P."/>
            <person name="Jayaseelan B.F."/>
            <person name="Wilson Alphonse C.R."/>
            <person name="Mahmoud A.H."/>
            <person name="Mohammed O.B."/>
            <person name="Ahmed Almunqedhi B.M."/>
            <person name="Rajaian Pushpabai R."/>
        </authorList>
    </citation>
    <scope>PROTEIN SEQUENCE</scope>
    <scope>SUBCELLULAR LOCATION</scope>
    <scope>MASS SPECTROMETRY</scope>
    <scope>HYDROXYLATION AT PRO-7</scope>
    <scope>AMIDATION AT GLY-17</scope>
    <source>
        <tissue>Venom</tissue>
    </source>
</reference>
<sequence>GCCSHPPCNVNNPHICG</sequence>
<accession>P0DUR2</accession>
<name>CA761_CONIN</name>
<dbReference type="GO" id="GO:0005576">
    <property type="term" value="C:extracellular region"/>
    <property type="evidence" value="ECO:0007669"/>
    <property type="project" value="UniProtKB-SubCell"/>
</dbReference>
<dbReference type="GO" id="GO:0035792">
    <property type="term" value="C:host cell postsynaptic membrane"/>
    <property type="evidence" value="ECO:0007669"/>
    <property type="project" value="UniProtKB-KW"/>
</dbReference>
<dbReference type="GO" id="GO:0030550">
    <property type="term" value="F:acetylcholine receptor inhibitor activity"/>
    <property type="evidence" value="ECO:0007669"/>
    <property type="project" value="UniProtKB-KW"/>
</dbReference>
<dbReference type="GO" id="GO:0099106">
    <property type="term" value="F:ion channel regulator activity"/>
    <property type="evidence" value="ECO:0007669"/>
    <property type="project" value="UniProtKB-KW"/>
</dbReference>
<dbReference type="GO" id="GO:0090729">
    <property type="term" value="F:toxin activity"/>
    <property type="evidence" value="ECO:0007669"/>
    <property type="project" value="UniProtKB-KW"/>
</dbReference>
<dbReference type="InterPro" id="IPR009958">
    <property type="entry name" value="Conotoxin_a-typ"/>
</dbReference>
<dbReference type="InterPro" id="IPR018072">
    <property type="entry name" value="Conotoxin_a-typ_CS"/>
</dbReference>
<dbReference type="Pfam" id="PF07365">
    <property type="entry name" value="Toxin_8"/>
    <property type="match status" value="1"/>
</dbReference>
<dbReference type="PROSITE" id="PS60014">
    <property type="entry name" value="ALPHA_CONOTOXIN"/>
    <property type="match status" value="1"/>
</dbReference>
<keyword id="KW-0008">Acetylcholine receptor inhibiting toxin</keyword>
<keyword id="KW-0027">Amidation</keyword>
<keyword id="KW-0903">Direct protein sequencing</keyword>
<keyword id="KW-1015">Disulfide bond</keyword>
<keyword id="KW-0379">Hydroxylation</keyword>
<keyword id="KW-0872">Ion channel impairing toxin</keyword>
<keyword id="KW-0528">Neurotoxin</keyword>
<keyword id="KW-0629">Postsynaptic neurotoxin</keyword>
<keyword id="KW-0964">Secreted</keyword>
<keyword id="KW-0800">Toxin</keyword>
<organism>
    <name type="scientific">Conus inscriptus</name>
    <name type="common">Engraved cone</name>
    <dbReference type="NCBI Taxonomy" id="257329"/>
    <lineage>
        <taxon>Eukaryota</taxon>
        <taxon>Metazoa</taxon>
        <taxon>Spiralia</taxon>
        <taxon>Lophotrochozoa</taxon>
        <taxon>Mollusca</taxon>
        <taxon>Gastropoda</taxon>
        <taxon>Caenogastropoda</taxon>
        <taxon>Neogastropoda</taxon>
        <taxon>Conoidea</taxon>
        <taxon>Conidae</taxon>
        <taxon>Conus</taxon>
        <taxon>Phasmoconus</taxon>
    </lineage>
</organism>
<comment type="function">
    <text evidence="1">Alpha-conotoxins act on postsynaptic membranes, they bind to the nicotinic acetylcholine receptors (nAChR) and thus inhibit them.</text>
</comment>
<comment type="subcellular location">
    <subcellularLocation>
        <location evidence="3">Secreted</location>
    </subcellularLocation>
</comment>
<comment type="tissue specificity">
    <text evidence="6">Expressed by the venom duct.</text>
</comment>
<comment type="domain">
    <text evidence="5">The cysteine framework is I (CC-C-C). Alpha4/7 pattern.</text>
</comment>
<comment type="mass spectrometry"/>
<comment type="similarity">
    <text evidence="5">Belongs to the conotoxin A superfamily.</text>
</comment>
<protein>
    <recommendedName>
        <fullName evidence="4">Alpha-conotoxin In1761</fullName>
    </recommendedName>
</protein>
<feature type="peptide" id="PRO_0000453224" description="Alpha-conotoxin In1761" evidence="3">
    <location>
        <begin position="1"/>
        <end position="17"/>
    </location>
</feature>
<feature type="region of interest" description="Ser-Xaa-Pro motif, crucial for potent interaction with nAChR" evidence="2">
    <location>
        <begin position="4"/>
        <end position="6"/>
    </location>
</feature>
<feature type="modified residue" description="4-hydroxyproline" evidence="3">
    <location>
        <position position="7"/>
    </location>
</feature>
<feature type="modified residue" description="Glycine amide" evidence="3">
    <location>
        <position position="17"/>
    </location>
</feature>
<feature type="disulfide bond" evidence="1">
    <location>
        <begin position="2"/>
        <end position="8"/>
    </location>
</feature>
<feature type="disulfide bond" evidence="1">
    <location>
        <begin position="3"/>
        <end position="16"/>
    </location>
</feature>
<proteinExistence type="evidence at protein level"/>